<accession>Q9C5J4</accession>
<accession>Q9LIF0</accession>
<keyword id="KW-0175">Coiled coil</keyword>
<keyword id="KW-1185">Reference proteome</keyword>
<keyword id="KW-0833">Ubl conjugation pathway</keyword>
<feature type="chain" id="PRO_0000409576" description="BTB/POZ domain-containing protein At3g22104">
    <location>
        <begin position="1"/>
        <end position="506"/>
    </location>
</feature>
<feature type="domain" description="BTB" evidence="3">
    <location>
        <begin position="6"/>
        <end position="76"/>
    </location>
</feature>
<feature type="domain" description="NPH3" evidence="4">
    <location>
        <begin position="187"/>
        <end position="435"/>
    </location>
</feature>
<feature type="region of interest" description="Disordered" evidence="5">
    <location>
        <begin position="485"/>
        <end position="506"/>
    </location>
</feature>
<feature type="coiled-coil region" evidence="2">
    <location>
        <begin position="421"/>
        <end position="492"/>
    </location>
</feature>
<name>Y3210_ARATH</name>
<dbReference type="EMBL" id="AP001306">
    <property type="protein sequence ID" value="BAB03059.1"/>
    <property type="status" value="ALT_SEQ"/>
    <property type="molecule type" value="Genomic_DNA"/>
</dbReference>
<dbReference type="EMBL" id="AB028622">
    <property type="protein sequence ID" value="BAB03059.1"/>
    <property type="status" value="JOINED"/>
    <property type="molecule type" value="Genomic_DNA"/>
</dbReference>
<dbReference type="EMBL" id="CP002686">
    <property type="protein sequence ID" value="AEE76590.1"/>
    <property type="molecule type" value="Genomic_DNA"/>
</dbReference>
<dbReference type="EMBL" id="AF360210">
    <property type="protein sequence ID" value="AAK25920.1"/>
    <property type="molecule type" value="mRNA"/>
</dbReference>
<dbReference type="EMBL" id="AY040058">
    <property type="protein sequence ID" value="AAK64116.1"/>
    <property type="molecule type" value="mRNA"/>
</dbReference>
<dbReference type="RefSeq" id="NP_001327524.1">
    <property type="nucleotide sequence ID" value="NM_001338562.1"/>
</dbReference>
<dbReference type="RefSeq" id="NP_001327525.1">
    <property type="nucleotide sequence ID" value="NM_001338561.1"/>
</dbReference>
<dbReference type="RefSeq" id="NP_001327526.1">
    <property type="nucleotide sequence ID" value="NM_001338563.1"/>
</dbReference>
<dbReference type="RefSeq" id="NP_188849.3">
    <property type="nucleotide sequence ID" value="NM_113107.7"/>
</dbReference>
<dbReference type="SMR" id="Q9C5J4"/>
<dbReference type="FunCoup" id="Q9C5J4">
    <property type="interactions" value="1274"/>
</dbReference>
<dbReference type="STRING" id="3702.Q9C5J4"/>
<dbReference type="iPTMnet" id="Q9C5J4"/>
<dbReference type="PaxDb" id="3702-AT3G22104.1"/>
<dbReference type="ProteomicsDB" id="234632"/>
<dbReference type="EnsemblPlants" id="AT3G22104.1">
    <property type="protein sequence ID" value="AT3G22104.1"/>
    <property type="gene ID" value="AT3G22104"/>
</dbReference>
<dbReference type="GeneID" id="821773"/>
<dbReference type="Gramene" id="AT3G22104.1">
    <property type="protein sequence ID" value="AT3G22104.1"/>
    <property type="gene ID" value="AT3G22104"/>
</dbReference>
<dbReference type="KEGG" id="ath:AT3G22104"/>
<dbReference type="Araport" id="AT3G22104"/>
<dbReference type="TAIR" id="AT3G22104"/>
<dbReference type="eggNOG" id="ENOG502QW1N">
    <property type="taxonomic scope" value="Eukaryota"/>
</dbReference>
<dbReference type="HOGENOM" id="CLU_005994_8_0_1"/>
<dbReference type="InParanoid" id="Q9C5J4"/>
<dbReference type="OMA" id="LDEMPQW"/>
<dbReference type="PhylomeDB" id="Q9C5J4"/>
<dbReference type="UniPathway" id="UPA00143"/>
<dbReference type="PRO" id="PR:Q9C5J4"/>
<dbReference type="Proteomes" id="UP000006548">
    <property type="component" value="Chromosome 3"/>
</dbReference>
<dbReference type="ExpressionAtlas" id="Q9C5J4">
    <property type="expression patterns" value="baseline and differential"/>
</dbReference>
<dbReference type="GO" id="GO:0016567">
    <property type="term" value="P:protein ubiquitination"/>
    <property type="evidence" value="ECO:0007669"/>
    <property type="project" value="UniProtKB-UniPathway"/>
</dbReference>
<dbReference type="Gene3D" id="3.30.710.10">
    <property type="entry name" value="Potassium Channel Kv1.1, Chain A"/>
    <property type="match status" value="1"/>
</dbReference>
<dbReference type="InterPro" id="IPR000210">
    <property type="entry name" value="BTB/POZ_dom"/>
</dbReference>
<dbReference type="InterPro" id="IPR043454">
    <property type="entry name" value="NPH3/RPT2-like"/>
</dbReference>
<dbReference type="InterPro" id="IPR027356">
    <property type="entry name" value="NPH3_dom"/>
</dbReference>
<dbReference type="InterPro" id="IPR011333">
    <property type="entry name" value="SKP1/BTB/POZ_sf"/>
</dbReference>
<dbReference type="PANTHER" id="PTHR32370">
    <property type="entry name" value="OS12G0117600 PROTEIN"/>
    <property type="match status" value="1"/>
</dbReference>
<dbReference type="Pfam" id="PF03000">
    <property type="entry name" value="NPH3"/>
    <property type="match status" value="1"/>
</dbReference>
<dbReference type="SMART" id="SM00225">
    <property type="entry name" value="BTB"/>
    <property type="match status" value="1"/>
</dbReference>
<dbReference type="SUPFAM" id="SSF54695">
    <property type="entry name" value="POZ domain"/>
    <property type="match status" value="1"/>
</dbReference>
<dbReference type="PROSITE" id="PS50097">
    <property type="entry name" value="BTB"/>
    <property type="match status" value="1"/>
</dbReference>
<dbReference type="PROSITE" id="PS51649">
    <property type="entry name" value="NPH3"/>
    <property type="match status" value="1"/>
</dbReference>
<reference key="1">
    <citation type="journal article" date="2000" name="DNA Res.">
        <title>Structural analysis of Arabidopsis thaliana chromosome 3. II. Sequence features of the 4,251,695 bp regions covered by 90 P1, TAC and BAC clones.</title>
        <authorList>
            <person name="Kaneko T."/>
            <person name="Katoh T."/>
            <person name="Sato S."/>
            <person name="Nakamura Y."/>
            <person name="Asamizu E."/>
            <person name="Tabata S."/>
        </authorList>
    </citation>
    <scope>NUCLEOTIDE SEQUENCE [LARGE SCALE GENOMIC DNA]</scope>
    <source>
        <strain>cv. Columbia</strain>
    </source>
</reference>
<reference key="2">
    <citation type="journal article" date="2000" name="DNA Res.">
        <title>Structural analysis of Arabidopsis thaliana chromosome 3. I. Sequence features of the regions of 4,504,864 bp covered by sixty P1 and TAC clones.</title>
        <authorList>
            <person name="Sato S."/>
            <person name="Nakamura Y."/>
            <person name="Kaneko T."/>
            <person name="Katoh T."/>
            <person name="Asamizu E."/>
            <person name="Tabata S."/>
        </authorList>
    </citation>
    <scope>NUCLEOTIDE SEQUENCE [LARGE SCALE GENOMIC DNA]</scope>
    <source>
        <strain>cv. Columbia</strain>
    </source>
</reference>
<reference key="3">
    <citation type="journal article" date="2017" name="Plant J.">
        <title>Araport11: a complete reannotation of the Arabidopsis thaliana reference genome.</title>
        <authorList>
            <person name="Cheng C.Y."/>
            <person name="Krishnakumar V."/>
            <person name="Chan A.P."/>
            <person name="Thibaud-Nissen F."/>
            <person name="Schobel S."/>
            <person name="Town C.D."/>
        </authorList>
    </citation>
    <scope>GENOME REANNOTATION</scope>
    <source>
        <strain>cv. Columbia</strain>
    </source>
</reference>
<reference key="4">
    <citation type="journal article" date="2003" name="Science">
        <title>Empirical analysis of transcriptional activity in the Arabidopsis genome.</title>
        <authorList>
            <person name="Yamada K."/>
            <person name="Lim J."/>
            <person name="Dale J.M."/>
            <person name="Chen H."/>
            <person name="Shinn P."/>
            <person name="Palm C.J."/>
            <person name="Southwick A.M."/>
            <person name="Wu H.C."/>
            <person name="Kim C.J."/>
            <person name="Nguyen M."/>
            <person name="Pham P.K."/>
            <person name="Cheuk R.F."/>
            <person name="Karlin-Newmann G."/>
            <person name="Liu S.X."/>
            <person name="Lam B."/>
            <person name="Sakano H."/>
            <person name="Wu T."/>
            <person name="Yu G."/>
            <person name="Miranda M."/>
            <person name="Quach H.L."/>
            <person name="Tripp M."/>
            <person name="Chang C.H."/>
            <person name="Lee J.M."/>
            <person name="Toriumi M.J."/>
            <person name="Chan M.M."/>
            <person name="Tang C.C."/>
            <person name="Onodera C.S."/>
            <person name="Deng J.M."/>
            <person name="Akiyama K."/>
            <person name="Ansari Y."/>
            <person name="Arakawa T."/>
            <person name="Banh J."/>
            <person name="Banno F."/>
            <person name="Bowser L."/>
            <person name="Brooks S.Y."/>
            <person name="Carninci P."/>
            <person name="Chao Q."/>
            <person name="Choy N."/>
            <person name="Enju A."/>
            <person name="Goldsmith A.D."/>
            <person name="Gurjal M."/>
            <person name="Hansen N.F."/>
            <person name="Hayashizaki Y."/>
            <person name="Johnson-Hopson C."/>
            <person name="Hsuan V.W."/>
            <person name="Iida K."/>
            <person name="Karnes M."/>
            <person name="Khan S."/>
            <person name="Koesema E."/>
            <person name="Ishida J."/>
            <person name="Jiang P.X."/>
            <person name="Jones T."/>
            <person name="Kawai J."/>
            <person name="Kamiya A."/>
            <person name="Meyers C."/>
            <person name="Nakajima M."/>
            <person name="Narusaka M."/>
            <person name="Seki M."/>
            <person name="Sakurai T."/>
            <person name="Satou M."/>
            <person name="Tamse R."/>
            <person name="Vaysberg M."/>
            <person name="Wallender E.K."/>
            <person name="Wong C."/>
            <person name="Yamamura Y."/>
            <person name="Yuan S."/>
            <person name="Shinozaki K."/>
            <person name="Davis R.W."/>
            <person name="Theologis A."/>
            <person name="Ecker J.R."/>
        </authorList>
    </citation>
    <scope>NUCLEOTIDE SEQUENCE [LARGE SCALE MRNA]</scope>
    <source>
        <strain>cv. Columbia</strain>
    </source>
</reference>
<reference key="5">
    <citation type="journal article" date="2005" name="J. Biol. Chem.">
        <title>Cullins 3a and 3b assemble with members of the broad complex/tramtrack/bric-a-brac (BTB) protein family to form essential ubiquitin-protein ligases (E3s) in Arabidopsis.</title>
        <authorList>
            <person name="Gingerich D.J."/>
            <person name="Gagne J.M."/>
            <person name="Salter D.W."/>
            <person name="Hellmann H."/>
            <person name="Estelle M."/>
            <person name="Ma L."/>
            <person name="Vierstra R.D."/>
        </authorList>
    </citation>
    <scope>DOMAIN BTB</scope>
</reference>
<gene>
    <name type="ordered locus">At3g22104</name>
    <name type="ORF">MZN24.32</name>
</gene>
<evidence type="ECO:0000250" key="1"/>
<evidence type="ECO:0000255" key="2"/>
<evidence type="ECO:0000255" key="3">
    <source>
        <dbReference type="PROSITE-ProRule" id="PRU00037"/>
    </source>
</evidence>
<evidence type="ECO:0000255" key="4">
    <source>
        <dbReference type="PROSITE-ProRule" id="PRU00982"/>
    </source>
</evidence>
<evidence type="ECO:0000256" key="5">
    <source>
        <dbReference type="SAM" id="MobiDB-lite"/>
    </source>
</evidence>
<evidence type="ECO:0000269" key="6">
    <source>
    </source>
</evidence>
<evidence type="ECO:0000305" key="7"/>
<protein>
    <recommendedName>
        <fullName>BTB/POZ domain-containing protein At3g22104</fullName>
    </recommendedName>
</protein>
<sequence>MEACCSDLEVDINGEQTIFLNKQIICAYSGTLRKLLGKSTSSSGNLKVIFNDFPGGAESFEFVSRFCYNDGRVAVMPSNVVFLHCAAKFMEVTKVLEQTEKCMEEIRYWAWPEVLLCLKQCQEVETSPEVDSLAAKLMDALVEKLCLTIEMSPSSAGSACSPDSSLFRFSCDSKSTESFKNCSVRLTWWFDEVLVLSSGLVEMFLKLMVLRKFDNLIISRFLFYYQKVKFCSASSHEKRKILETIIDTLCVLDRSCVPCKSLFAVLRLALGLNINKSCMNKLEVMIGHQLDQATLDNLLVPSPSKSSHLYYVNLVLRFTKAFLDGARSGLQLKKVSSLIDQYIAEVAPDPCLKPSKFLSLITLVPDSARESHEDIYRAIDMYLEAHTGTTDGEKLNLIRTLSYEKLSGESRAHISRNQKFQAIETLDEQQQQQQQQQQQKQLILRMEKVETSGENEKLKEHIEGIQWRVMELERACLKMQNQMEVIKKRSKSSSKGSNRSLPKLCS</sequence>
<organism>
    <name type="scientific">Arabidopsis thaliana</name>
    <name type="common">Mouse-ear cress</name>
    <dbReference type="NCBI Taxonomy" id="3702"/>
    <lineage>
        <taxon>Eukaryota</taxon>
        <taxon>Viridiplantae</taxon>
        <taxon>Streptophyta</taxon>
        <taxon>Embryophyta</taxon>
        <taxon>Tracheophyta</taxon>
        <taxon>Spermatophyta</taxon>
        <taxon>Magnoliopsida</taxon>
        <taxon>eudicotyledons</taxon>
        <taxon>Gunneridae</taxon>
        <taxon>Pentapetalae</taxon>
        <taxon>rosids</taxon>
        <taxon>malvids</taxon>
        <taxon>Brassicales</taxon>
        <taxon>Brassicaceae</taxon>
        <taxon>Camelineae</taxon>
        <taxon>Arabidopsis</taxon>
    </lineage>
</organism>
<comment type="function">
    <text evidence="1">May act as a substrate-specific adapter of an E3 ubiquitin-protein ligase complex (CUL3-RBX1-BTB) which mediates the ubiquitination and subsequent proteasomal degradation of target proteins.</text>
</comment>
<comment type="pathway">
    <text>Protein modification; protein ubiquitination.</text>
</comment>
<comment type="domain">
    <text evidence="6">The BTB/POZ domain mediates the interaction with some component of ubiquitin ligase complexes.</text>
</comment>
<comment type="similarity">
    <text evidence="4">Belongs to the NPH3 family.</text>
</comment>
<comment type="sequence caution" evidence="7">
    <conflict type="erroneous gene model prediction">
        <sequence resource="EMBL-CDS" id="BAB03059"/>
    </conflict>
</comment>
<proteinExistence type="evidence at transcript level"/>